<feature type="chain" id="PRO_0000416544" description="Nonribosomal peptide synthetase sidE">
    <location>
        <begin position="1"/>
        <end position="2109"/>
    </location>
</feature>
<feature type="domain" description="Carrier 1" evidence="1">
    <location>
        <begin position="537"/>
        <end position="613"/>
    </location>
</feature>
<feature type="domain" description="Carrier 2" evidence="1">
    <location>
        <begin position="1584"/>
        <end position="1660"/>
    </location>
</feature>
<feature type="region of interest" description="Adenylation 1">
    <location>
        <begin position="31"/>
        <end position="512"/>
    </location>
</feature>
<feature type="region of interest" description="Condensation 1">
    <location>
        <begin position="646"/>
        <end position="908"/>
    </location>
</feature>
<feature type="region of interest" description="Adenylation 2">
    <location>
        <begin position="1058"/>
        <end position="1555"/>
    </location>
</feature>
<feature type="region of interest" description="Condensation 2">
    <location>
        <begin position="1695"/>
        <end position="1968"/>
    </location>
</feature>
<feature type="modified residue" description="O-(pantetheine 4'-phosphoryl)serine" evidence="1">
    <location>
        <position position="574"/>
    </location>
</feature>
<feature type="modified residue" description="O-(pantetheine 4'-phosphoryl)serine" evidence="1">
    <location>
        <position position="1621"/>
    </location>
</feature>
<keyword id="KW-0436">Ligase</keyword>
<keyword id="KW-0596">Phosphopantetheine</keyword>
<keyword id="KW-0597">Phosphoprotein</keyword>
<keyword id="KW-1185">Reference proteome</keyword>
<keyword id="KW-0677">Repeat</keyword>
<keyword id="KW-0843">Virulence</keyword>
<protein>
    <recommendedName>
        <fullName evidence="9">Nonribosomal peptide synthetase sidE</fullName>
        <shortName evidence="9">NPRS sidE</shortName>
        <ecNumber evidence="13">6.3.2.-</ecNumber>
    </recommendedName>
    <alternativeName>
        <fullName evidence="11">Siderophore synthetase E</fullName>
    </alternativeName>
</protein>
<organism>
    <name type="scientific">Aspergillus fumigatus (strain ATCC MYA-4609 / CBS 101355 / FGSC A1100 / Af293)</name>
    <name type="common">Neosartorya fumigata</name>
    <dbReference type="NCBI Taxonomy" id="330879"/>
    <lineage>
        <taxon>Eukaryota</taxon>
        <taxon>Fungi</taxon>
        <taxon>Dikarya</taxon>
        <taxon>Ascomycota</taxon>
        <taxon>Pezizomycotina</taxon>
        <taxon>Eurotiomycetes</taxon>
        <taxon>Eurotiomycetidae</taxon>
        <taxon>Eurotiales</taxon>
        <taxon>Aspergillaceae</taxon>
        <taxon>Aspergillus</taxon>
        <taxon>Aspergillus subgen. Fumigati</taxon>
    </lineage>
</organism>
<name>SIDE_ASPFU</name>
<gene>
    <name evidence="10" type="primary">NRPS3</name>
    <name evidence="9" type="synonym">sidE</name>
    <name type="ORF">AFUA_3G03350</name>
</gene>
<accession>Q4WF61</accession>
<reference key="1">
    <citation type="journal article" date="2005" name="Nature">
        <title>Genomic sequence of the pathogenic and allergenic filamentous fungus Aspergillus fumigatus.</title>
        <authorList>
            <person name="Nierman W.C."/>
            <person name="Pain A."/>
            <person name="Anderson M.J."/>
            <person name="Wortman J.R."/>
            <person name="Kim H.S."/>
            <person name="Arroyo J."/>
            <person name="Berriman M."/>
            <person name="Abe K."/>
            <person name="Archer D.B."/>
            <person name="Bermejo C."/>
            <person name="Bennett J.W."/>
            <person name="Bowyer P."/>
            <person name="Chen D."/>
            <person name="Collins M."/>
            <person name="Coulsen R."/>
            <person name="Davies R."/>
            <person name="Dyer P.S."/>
            <person name="Farman M.L."/>
            <person name="Fedorova N."/>
            <person name="Fedorova N.D."/>
            <person name="Feldblyum T.V."/>
            <person name="Fischer R."/>
            <person name="Fosker N."/>
            <person name="Fraser A."/>
            <person name="Garcia J.L."/>
            <person name="Garcia M.J."/>
            <person name="Goble A."/>
            <person name="Goldman G.H."/>
            <person name="Gomi K."/>
            <person name="Griffith-Jones S."/>
            <person name="Gwilliam R."/>
            <person name="Haas B.J."/>
            <person name="Haas H."/>
            <person name="Harris D.E."/>
            <person name="Horiuchi H."/>
            <person name="Huang J."/>
            <person name="Humphray S."/>
            <person name="Jimenez J."/>
            <person name="Keller N."/>
            <person name="Khouri H."/>
            <person name="Kitamoto K."/>
            <person name="Kobayashi T."/>
            <person name="Konzack S."/>
            <person name="Kulkarni R."/>
            <person name="Kumagai T."/>
            <person name="Lafton A."/>
            <person name="Latge J.-P."/>
            <person name="Li W."/>
            <person name="Lord A."/>
            <person name="Lu C."/>
            <person name="Majoros W.H."/>
            <person name="May G.S."/>
            <person name="Miller B.L."/>
            <person name="Mohamoud Y."/>
            <person name="Molina M."/>
            <person name="Monod M."/>
            <person name="Mouyna I."/>
            <person name="Mulligan S."/>
            <person name="Murphy L.D."/>
            <person name="O'Neil S."/>
            <person name="Paulsen I."/>
            <person name="Penalva M.A."/>
            <person name="Pertea M."/>
            <person name="Price C."/>
            <person name="Pritchard B.L."/>
            <person name="Quail M.A."/>
            <person name="Rabbinowitsch E."/>
            <person name="Rawlins N."/>
            <person name="Rajandream M.A."/>
            <person name="Reichard U."/>
            <person name="Renauld H."/>
            <person name="Robson G.D."/>
            <person name="Rodriguez de Cordoba S."/>
            <person name="Rodriguez-Pena J.M."/>
            <person name="Ronning C.M."/>
            <person name="Rutter S."/>
            <person name="Salzberg S.L."/>
            <person name="Sanchez M."/>
            <person name="Sanchez-Ferrero J.C."/>
            <person name="Saunders D."/>
            <person name="Seeger K."/>
            <person name="Squares R."/>
            <person name="Squares S."/>
            <person name="Takeuchi M."/>
            <person name="Tekaia F."/>
            <person name="Turner G."/>
            <person name="Vazquez de Aldana C.R."/>
            <person name="Weidman J."/>
            <person name="White O."/>
            <person name="Woodward J.R."/>
            <person name="Yu J.-H."/>
            <person name="Fraser C.M."/>
            <person name="Galagan J.E."/>
            <person name="Asai K."/>
            <person name="Machida M."/>
            <person name="Hall N."/>
            <person name="Barrell B.G."/>
            <person name="Denning D.W."/>
        </authorList>
    </citation>
    <scope>NUCLEOTIDE SEQUENCE [LARGE SCALE GENOMIC DNA]</scope>
    <source>
        <strain>ATCC MYA-4609 / CBS 101355 / FGSC A1100 / Af293</strain>
    </source>
</reference>
<reference key="2">
    <citation type="journal article" date="2004" name="J. Exp. Med.">
        <title>Siderophore biosynthesis but not reductive iron assimilation is essential for Aspergillus fumigatus virulence.</title>
        <authorList>
            <person name="Schrettl M."/>
            <person name="Bignell E."/>
            <person name="Kragl C."/>
            <person name="Joechl C."/>
            <person name="Rogers T."/>
            <person name="Arst H.N. Jr."/>
            <person name="Haynes K."/>
            <person name="Haas H."/>
        </authorList>
    </citation>
    <scope>FUNCTION</scope>
</reference>
<reference key="3">
    <citation type="journal article" date="2005" name="Infect. Immun.">
        <title>The Aspergillus fumigatus siderophore biosynthetic gene sidA, encoding L-ornithine N(5)-oxygenase, is required for virulence.</title>
        <authorList>
            <person name="Hissen A.H."/>
            <person name="Wan A.N."/>
            <person name="Warwas M.L."/>
            <person name="Pinto L.J."/>
            <person name="Moore M.M."/>
        </authorList>
    </citation>
    <scope>FUNCTION</scope>
    <source>
        <strain>NIH 5233 / ATCC 13073</strain>
    </source>
</reference>
<reference key="4">
    <citation type="journal article" date="2005" name="FEMS Microbiol. Lett.">
        <title>The expression of selected non-ribosomal peptide synthetases in Aspergillus fumigatus is controlled by the availability of free iron.</title>
        <authorList>
            <person name="Reiber K."/>
            <person name="Reeves E.P."/>
            <person name="Neville C.M."/>
            <person name="Winkler R."/>
            <person name="Gebhardt P."/>
            <person name="Kavanagh K."/>
            <person name="Doyle S."/>
        </authorList>
    </citation>
    <scope>DOMAIN</scope>
    <scope>INDUCTION</scope>
    <scope>FUNCTION</scope>
</reference>
<reference key="5">
    <citation type="journal article" date="2006" name="Gene">
        <title>Phylogenomic analysis of non-ribosomal peptide synthetases in the genus Aspergillus.</title>
        <authorList>
            <person name="Cramer R.A. Jr."/>
            <person name="Stajich J.E."/>
            <person name="Yamanaka Y."/>
            <person name="Dietrich F.S."/>
            <person name="Steinbach W.J."/>
            <person name="Perfect J.R."/>
        </authorList>
    </citation>
    <scope>NOMENCLATURE</scope>
</reference>
<reference key="6">
    <citation type="journal article" date="2007" name="Microbiology">
        <title>Nonribosomal peptide synthesis in Aspergillus fumigatus and other fungi.</title>
        <authorList>
            <person name="Stack D."/>
            <person name="Neville C."/>
            <person name="Doyle S."/>
        </authorList>
    </citation>
    <scope>REVIEW ON FUNCTION</scope>
    <scope>DOMAIN</scope>
</reference>
<reference key="7">
    <citation type="journal article" date="2007" name="PLoS Pathog.">
        <title>Distinct roles for intra- and extracellular siderophores during Aspergillus fumigatus infection.</title>
        <authorList>
            <person name="Schrettl M."/>
            <person name="Bignell E."/>
            <person name="Kragl C."/>
            <person name="Sabiha Y."/>
            <person name="Loss O."/>
            <person name="Eisendle M."/>
            <person name="Wallner A."/>
            <person name="Arst H.N. Jr."/>
            <person name="Haynes K."/>
            <person name="Haas H."/>
        </authorList>
    </citation>
    <scope>FUNCTION</scope>
</reference>
<reference key="8">
    <citation type="journal article" date="2008" name="Mol. Microbiol.">
        <title>SreA-mediated iron regulation in Aspergillus fumigatus.</title>
        <authorList>
            <person name="Schrettl M."/>
            <person name="Kim H.S."/>
            <person name="Eisendle M."/>
            <person name="Kragl C."/>
            <person name="Nierman W.C."/>
            <person name="Heinekamp T."/>
            <person name="Werner E.R."/>
            <person name="Jacobsen I."/>
            <person name="Illmer P."/>
            <person name="Yi H."/>
            <person name="Brakhage A.A."/>
            <person name="Haas H."/>
        </authorList>
    </citation>
    <scope>INDUCTION</scope>
</reference>
<reference key="9">
    <citation type="journal article" date="2011" name="Appl. Environ. Microbiol.">
        <title>SidL, an Aspergillus fumigatus transacetylase involved in biosynthesis of the siderophores ferricrocin and hydroxyferricrocin.</title>
        <authorList>
            <person name="Blatzer M."/>
            <person name="Schrettl M."/>
            <person name="Sarg B."/>
            <person name="Lindner H.H."/>
            <person name="Pfaller K."/>
            <person name="Haas H."/>
        </authorList>
    </citation>
    <scope>FUNCTION</scope>
</reference>
<reference key="10">
    <citation type="journal article" date="2012" name="Proc. Natl. Acad. Sci. U.S.A.">
        <title>Mevalonate governs interdependency of ergosterol and siderophore biosyntheses in the fungal pathogen Aspergillus fumigatus.</title>
        <authorList>
            <person name="Yasmin S."/>
            <person name="Alcazar-Fuoli L."/>
            <person name="Gruendlinger M."/>
            <person name="Puempel T."/>
            <person name="Cairns T."/>
            <person name="Blatzer M."/>
            <person name="Lopez J.F."/>
            <person name="Grimalt J.O."/>
            <person name="Bignell E."/>
            <person name="Haas H."/>
        </authorList>
    </citation>
    <scope>FUNCTION</scope>
</reference>
<dbReference type="EC" id="6.3.2.-" evidence="13"/>
<dbReference type="EMBL" id="AAHF01000010">
    <property type="protein sequence ID" value="EAL86616.2"/>
    <property type="molecule type" value="Genomic_DNA"/>
</dbReference>
<dbReference type="RefSeq" id="XP_748654.2">
    <property type="nucleotide sequence ID" value="XM_743561.2"/>
</dbReference>
<dbReference type="SMR" id="Q4WF61"/>
<dbReference type="STRING" id="330879.Q4WF61"/>
<dbReference type="EnsemblFungi" id="EAL86616">
    <property type="protein sequence ID" value="EAL86616"/>
    <property type="gene ID" value="AFUA_3G03350"/>
</dbReference>
<dbReference type="GeneID" id="3506069"/>
<dbReference type="KEGG" id="afm:AFUA_3G03350"/>
<dbReference type="VEuPathDB" id="FungiDB:Afu3g03350"/>
<dbReference type="eggNOG" id="KOG1176">
    <property type="taxonomic scope" value="Eukaryota"/>
</dbReference>
<dbReference type="eggNOG" id="KOG1178">
    <property type="taxonomic scope" value="Eukaryota"/>
</dbReference>
<dbReference type="HOGENOM" id="CLU_000022_0_12_1"/>
<dbReference type="InParanoid" id="Q4WF61"/>
<dbReference type="OMA" id="LFDFWSH"/>
<dbReference type="OrthoDB" id="416786at2759"/>
<dbReference type="Proteomes" id="UP000002530">
    <property type="component" value="Chromosome 3"/>
</dbReference>
<dbReference type="GO" id="GO:0005737">
    <property type="term" value="C:cytoplasm"/>
    <property type="evidence" value="ECO:0000318"/>
    <property type="project" value="GO_Central"/>
</dbReference>
<dbReference type="GO" id="GO:0016874">
    <property type="term" value="F:ligase activity"/>
    <property type="evidence" value="ECO:0007669"/>
    <property type="project" value="UniProtKB-KW"/>
</dbReference>
<dbReference type="GO" id="GO:0031177">
    <property type="term" value="F:phosphopantetheine binding"/>
    <property type="evidence" value="ECO:0000318"/>
    <property type="project" value="GO_Central"/>
</dbReference>
<dbReference type="GO" id="GO:0043041">
    <property type="term" value="P:amino acid activation for nonribosomal peptide biosynthetic process"/>
    <property type="evidence" value="ECO:0000318"/>
    <property type="project" value="GO_Central"/>
</dbReference>
<dbReference type="GO" id="GO:0010106">
    <property type="term" value="P:cellular response to iron ion starvation"/>
    <property type="evidence" value="ECO:0000270"/>
    <property type="project" value="AspGD"/>
</dbReference>
<dbReference type="GO" id="GO:0019184">
    <property type="term" value="P:nonribosomal peptide biosynthetic process"/>
    <property type="evidence" value="ECO:0000255"/>
    <property type="project" value="AspGD"/>
</dbReference>
<dbReference type="GO" id="GO:0019748">
    <property type="term" value="P:secondary metabolic process"/>
    <property type="evidence" value="ECO:0000303"/>
    <property type="project" value="AspGD"/>
</dbReference>
<dbReference type="GO" id="GO:0044550">
    <property type="term" value="P:secondary metabolite biosynthetic process"/>
    <property type="evidence" value="ECO:0000318"/>
    <property type="project" value="GO_Central"/>
</dbReference>
<dbReference type="CDD" id="cd05918">
    <property type="entry name" value="A_NRPS_SidN3_like"/>
    <property type="match status" value="2"/>
</dbReference>
<dbReference type="CDD" id="cd19542">
    <property type="entry name" value="CT_NRPS-like"/>
    <property type="match status" value="1"/>
</dbReference>
<dbReference type="CDD" id="cd19545">
    <property type="entry name" value="FUM14_C_NRPS-like"/>
    <property type="match status" value="1"/>
</dbReference>
<dbReference type="FunFam" id="3.40.50.12780:FF:000012">
    <property type="entry name" value="Non-ribosomal peptide synthetase"/>
    <property type="match status" value="1"/>
</dbReference>
<dbReference type="FunFam" id="3.30.300.30:FF:000015">
    <property type="entry name" value="Nonribosomal peptide synthase SidD"/>
    <property type="match status" value="1"/>
</dbReference>
<dbReference type="FunFam" id="1.10.1200.10:FF:000048">
    <property type="entry name" value="Nonribosomal peptide synthase SidE"/>
    <property type="match status" value="1"/>
</dbReference>
<dbReference type="FunFam" id="3.30.300.30:FF:000060">
    <property type="entry name" value="Nonribosomal peptide synthase SidE"/>
    <property type="match status" value="1"/>
</dbReference>
<dbReference type="FunFam" id="3.30.559.10:FF:000052">
    <property type="entry name" value="Nonribosomal peptide synthase SidE"/>
    <property type="match status" value="1"/>
</dbReference>
<dbReference type="FunFam" id="3.30.559.10:FF:000073">
    <property type="entry name" value="Nonribosomal peptide synthase SidE"/>
    <property type="match status" value="1"/>
</dbReference>
<dbReference type="FunFam" id="3.30.559.30:FF:000012">
    <property type="entry name" value="Nonribosomal peptide synthase SidE"/>
    <property type="match status" value="1"/>
</dbReference>
<dbReference type="FunFam" id="3.40.50.12780:FF:000080">
    <property type="entry name" value="Nonribosomal peptide synthase SidE"/>
    <property type="match status" value="1"/>
</dbReference>
<dbReference type="FunFam" id="3.30.559.30:FF:000024">
    <property type="entry name" value="Nonribosomal peptide synthase sidE"/>
    <property type="match status" value="1"/>
</dbReference>
<dbReference type="Gene3D" id="3.30.300.30">
    <property type="match status" value="2"/>
</dbReference>
<dbReference type="Gene3D" id="1.10.1200.10">
    <property type="entry name" value="ACP-like"/>
    <property type="match status" value="2"/>
</dbReference>
<dbReference type="Gene3D" id="3.30.559.10">
    <property type="entry name" value="Chloramphenicol acetyltransferase-like domain"/>
    <property type="match status" value="2"/>
</dbReference>
<dbReference type="Gene3D" id="3.40.50.12780">
    <property type="entry name" value="N-terminal domain of ligase-like"/>
    <property type="match status" value="2"/>
</dbReference>
<dbReference type="Gene3D" id="3.30.559.30">
    <property type="entry name" value="Nonribosomal peptide synthetase, condensation domain"/>
    <property type="match status" value="2"/>
</dbReference>
<dbReference type="InterPro" id="IPR010071">
    <property type="entry name" value="AA_adenyl_dom"/>
</dbReference>
<dbReference type="InterPro" id="IPR036736">
    <property type="entry name" value="ACP-like_sf"/>
</dbReference>
<dbReference type="InterPro" id="IPR025110">
    <property type="entry name" value="AMP-bd_C"/>
</dbReference>
<dbReference type="InterPro" id="IPR045851">
    <property type="entry name" value="AMP-bd_C_sf"/>
</dbReference>
<dbReference type="InterPro" id="IPR020845">
    <property type="entry name" value="AMP-binding_CS"/>
</dbReference>
<dbReference type="InterPro" id="IPR000873">
    <property type="entry name" value="AMP-dep_synth/lig_dom"/>
</dbReference>
<dbReference type="InterPro" id="IPR042099">
    <property type="entry name" value="ANL_N_sf"/>
</dbReference>
<dbReference type="InterPro" id="IPR023213">
    <property type="entry name" value="CAT-like_dom_sf"/>
</dbReference>
<dbReference type="InterPro" id="IPR001242">
    <property type="entry name" value="Condensatn"/>
</dbReference>
<dbReference type="InterPro" id="IPR020806">
    <property type="entry name" value="PKS_PP-bd"/>
</dbReference>
<dbReference type="InterPro" id="IPR009081">
    <property type="entry name" value="PP-bd_ACP"/>
</dbReference>
<dbReference type="InterPro" id="IPR006162">
    <property type="entry name" value="Ppantetheine_attach_site"/>
</dbReference>
<dbReference type="NCBIfam" id="TIGR01733">
    <property type="entry name" value="AA-adenyl-dom"/>
    <property type="match status" value="1"/>
</dbReference>
<dbReference type="PANTHER" id="PTHR45527:SF1">
    <property type="entry name" value="FATTY ACID SYNTHASE"/>
    <property type="match status" value="1"/>
</dbReference>
<dbReference type="PANTHER" id="PTHR45527">
    <property type="entry name" value="NONRIBOSOMAL PEPTIDE SYNTHETASE"/>
    <property type="match status" value="1"/>
</dbReference>
<dbReference type="Pfam" id="PF00501">
    <property type="entry name" value="AMP-binding"/>
    <property type="match status" value="2"/>
</dbReference>
<dbReference type="Pfam" id="PF13193">
    <property type="entry name" value="AMP-binding_C"/>
    <property type="match status" value="1"/>
</dbReference>
<dbReference type="Pfam" id="PF00668">
    <property type="entry name" value="Condensation"/>
    <property type="match status" value="2"/>
</dbReference>
<dbReference type="Pfam" id="PF00550">
    <property type="entry name" value="PP-binding"/>
    <property type="match status" value="2"/>
</dbReference>
<dbReference type="SMART" id="SM00823">
    <property type="entry name" value="PKS_PP"/>
    <property type="match status" value="2"/>
</dbReference>
<dbReference type="SUPFAM" id="SSF56801">
    <property type="entry name" value="Acetyl-CoA synthetase-like"/>
    <property type="match status" value="2"/>
</dbReference>
<dbReference type="SUPFAM" id="SSF47336">
    <property type="entry name" value="ACP-like"/>
    <property type="match status" value="2"/>
</dbReference>
<dbReference type="SUPFAM" id="SSF52777">
    <property type="entry name" value="CoA-dependent acyltransferases"/>
    <property type="match status" value="4"/>
</dbReference>
<dbReference type="PROSITE" id="PS00455">
    <property type="entry name" value="AMP_BINDING"/>
    <property type="match status" value="2"/>
</dbReference>
<dbReference type="PROSITE" id="PS50075">
    <property type="entry name" value="CARRIER"/>
    <property type="match status" value="2"/>
</dbReference>
<dbReference type="PROSITE" id="PS00012">
    <property type="entry name" value="PHOSPHOPANTETHEINE"/>
    <property type="match status" value="1"/>
</dbReference>
<evidence type="ECO:0000255" key="1">
    <source>
        <dbReference type="PROSITE-ProRule" id="PRU00258"/>
    </source>
</evidence>
<evidence type="ECO:0000269" key="2">
    <source>
    </source>
</evidence>
<evidence type="ECO:0000269" key="3">
    <source>
    </source>
</evidence>
<evidence type="ECO:0000269" key="4">
    <source>
    </source>
</evidence>
<evidence type="ECO:0000269" key="5">
    <source>
    </source>
</evidence>
<evidence type="ECO:0000269" key="6">
    <source>
    </source>
</evidence>
<evidence type="ECO:0000269" key="7">
    <source>
    </source>
</evidence>
<evidence type="ECO:0000269" key="8">
    <source>
    </source>
</evidence>
<evidence type="ECO:0000303" key="9">
    <source>
    </source>
</evidence>
<evidence type="ECO:0000303" key="10">
    <source>
    </source>
</evidence>
<evidence type="ECO:0000303" key="11">
    <source>
    </source>
</evidence>
<evidence type="ECO:0000305" key="12"/>
<evidence type="ECO:0000305" key="13">
    <source>
    </source>
</evidence>
<comment type="function">
    <text evidence="2 4 6 7 8">Nonribosomal peptide synthetase; part of the siderophore biosynthetic pathway (PubMed:17845073). Aspergillus fumigatus produces four types of siderophores, low-molecular-mass iron chelators, including excreted fusarinine C (FsC) and triacetylfusarinine C (TAFC) for iron uptake and intacellular ferricrocin (FC) for hyphal and hydroxyferricrocin (HFC) for conidial iron distribution and storage. TAFC consists of three N(2)-acetyl-N(5)-anhydromevalonyl-N(5)-hydroxyornithine residues cyclically linked by ester bonds; FC is a cyclic hexapeptide with the structure Gly-Ser-Gly-(N(5)-acetyl-N(5)-hydroxyornithine)x3. The biosynthesis of all four siderophores depends on the hydroxylation of ornithine, catalyzed by the monooxygenase sidA (PubMed:15504822, PubMed:16113265). Subsequently, the pathways for biosynthesis of extra- and intracellular siderophores split (PubMed:17845073). For biosynthesis of extracellular siderophores, the transacylase sidF transfers anhydromevalonyl to N(5)-hydroxyornithine (PubMed:17845073). The required anhydromevalonyl-CoA moiety is derived from mevalonate by CoA ligation and dehydration catalyzed by sidI and sidH respectively (PubMed:22106303). The acetylation of N(5)-hydroxyornithine for FC biosynthesis involves the constitutively expressed sidL (PubMed:21622789). FC is hydroxylated to HFC by an as yet uncharacterized enzyme during conidiation (PubMed:17845073). Assembly of fusarinine C (FsC) and FC is catalyzed by two different nonribosomal peptide synthetases (NRPS), sidD and sidC respectively (PubMed:17845073). Subsequently, sidG catalyzes N2-acetylation of FsC for forming TAFC (PubMed:17845073). Both extra- and intracellular siderophores are crucial for growth during iron limitation and virulence (PubMed:16113265).</text>
</comment>
<comment type="pathway">
    <text evidence="6">Siderophore biosynthesis.</text>
</comment>
<comment type="induction">
    <text evidence="3">Expression is reduced by up to 90 percent under iron-depleted conditions.</text>
</comment>
<comment type="domain">
    <text evidence="3 5">NRP synthetases are composed of discrete domains (adenylation (A), thiolation (T) or peptidyl carrier protein (PCP) and condensation (C) domains) which when grouped together are referred to as a single module. Each module is responsible for the recognition (via the A domain) and incorporation of a single amino acid into the growing peptide product. Thus, an NRP synthetase is generally composed of one or more modules and can terminate in a thioesterase domain (TE) that releases the newly synthesized peptide from the enzyme. Occasionally, epimerase (E) domains (responsible for l- to d- amino acid conversion) are present within the NRP synthetase. NRPS3 has the following architecture: A-T-C-A-T-C.</text>
</comment>
<comment type="similarity">
    <text evidence="12">Belongs to the NRP synthetase family.</text>
</comment>
<sequence>MAPVALRDLAESPELEGTEVVSMKARSSPPLTPPSPPCLVTDYIRHQVESNPDAPAVQCEQEQPYSYAALWQLVEHIAAAGQFRAGRIMPLCMDPSVEFVATVLAILRAGSAYVILDPEGSAQRNRVIAEDCGCEPVIVHEKYAAFFDHSVTIESIQSIQNHGQLDPPSITPSDLAYLIYTSGSTGTPKGVLLSHRAVSHGIDQFQLNGRKRWLLFYNPIFSAAQRTILATLSKGACLCLTRRDRLATALPEVLNNLQIDALGITPSALALLSPGETPACLQQITTVGEPLSQSLVNKWADRVHLRVSYGLSECAQLNFSRQLQPGDNPRNPGLPSDTTTAIVLEPGTMTRLSVNEPGELCLYGPQVANGYHQRQKETQAAFVKAPKDTHGTMMFRTGDLAVQREDGTFEILGRIDHQVKIHGQRVEPEEVAAKLATVKGVASLACVGCYINERMSLVAAIVPSPEADWGTLVQYLRDHARQSFPPYMVPSYWMSCTEFPTNQNGKVDFRAIRRLAESTEVSKMLGHSTSPKDGATAGLSETASKIAQVWAAVLNLPASSIIPSDSLVALGGTSIDAIRAIRELKGHGIHVELADMLQAHTIEEIADTVQLDSSPTHVSNEPAAPFDYISDAVLKADLLADRRVVDAYPVTALQEGILASTLQGSQDYLYQRVFDVRHLDLVRLQLAFQVVFWRTELLKSTFVAAAKGFLQVVRNDFNLPWSEVSLSLSEYLEQDKNNGVTLGEPFMRVAVLDRSILVVSVHHALFDFWSHRFLFDDVARVYYGRRPEKRPEWKSFVGLLHTRDTKASQDFWREHLGEAVPTVLNYAPVTKTSTARRTVSQEVRAASSALRAPLGAIIHAAWALVLSSHIASKSVTMATAVSGRELPVPGIEALNGPTLAVVPYAIAIDSEQTLQQLVQSVNTSLWKVIKHSQVGVRNALAAAERQGTTLFDTMVNILVNGKVNDDISKEVFQLYGRRPVWRTEYTTLNVEEGATGIDVTLTSPMEEHRLEFILEQFCMALNLIASNPRQTVKATNLVSETELQFMLQSHKNLPDATRTLNGQFEATVRTYPNRTAINYQNEQFLTYAELDSEANRMTHYLSELGVVPGDIVPLLLEKSPLMIKAILALFKLGAAYVPLSPENPLERNAYIARDVSAKFVLTEKEHEAYFASESDIPSVLLDQANLSQYGPEPQLVTVSPDALAYLLYTSGSTGLPKGVMVTHGACAAAMQSIIEFEHRQGQESRMLQFSNYVFDVSLYDFFVALHSGGTLCIAPSERLLNNLAEVINEMNVNHVFLTPTVARLLNPKDVPNLESMTVGGEQLTRDVVTTWASRVTLRNGYGPTEASVLVTMKDVDTDTTGGNIGRPLASVGAIVLEADGVRPVPYGAVGELCFFGPQLAQGYFKKPDITSAAFIESEVLNGRRLYRSGDLARYLPNGDIECLGRKDDQVKINGHRIELGEIEQAFLRTGEIKDCVLTVWKHNSTAHLVAVAVFDGASSEKPGEVLPLDGFAENVQRVRSKLTGLTPYMIPKAIVPLSSLPRLPSGKANRKQLKAMVQSLSQGELTKFSFDKVGAAQSKGAVIPLASETQKVLQQGWIETLQLADDDFGLEADFLSLGGDSIAAINLVSWLRRKQLKISVRDVLKYTSLGAMADQLKGESGDAHQIQKKTFTPPSEIDAAISAAGLQATEYEYIYPCPPGQAEFLTQGAHPEALWSLMTVRKVGSDFAPRQWIDLVRQLTTTNEILRTTFTRCHGNWYGVVLRDATPVVEIYEDVSNEQRQQIIKSLDDYRFVFGKPFIRYAILHLSTGETEIVTKLDHGLYDGTLLRIFGEHFQAYQDNVPVDRFTSFKDFAFHIWQMDKSRTLSFWKQSEKRPIAFEFPSSSGTEPRINSVHVHTINLEFDAFAKSTGATVSIIFQSIFQLWLALRSNQRDVAFDYLYTGRNIDLPDPQTINGTCANFLPMRSKVDPSMPVSEFLRQTQDEFWQYTENSTVGMDEIHEACETTREGFSNKTLFLFQPFEPAPATAKQYEKWIVMAKSQVTMPQPYAVVFEVVKTADVNEYKLKFAFDKRVYEKEQVQGEAQVIEKLLAKVMENAEASVGDVLGSFRS</sequence>
<proteinExistence type="evidence at transcript level"/>